<comment type="function">
    <text evidence="1">Involved in the degradation of certain denaturated proteins, including DnaA, during heat shock stress.</text>
</comment>
<comment type="subcellular location">
    <subcellularLocation>
        <location evidence="1">Cytoplasm</location>
    </subcellularLocation>
</comment>
<comment type="similarity">
    <text evidence="1">Belongs to the HspQ family.</text>
</comment>
<accession>B4ET62</accession>
<feature type="chain" id="PRO_1000164513" description="Heat shock protein HspQ">
    <location>
        <begin position="1"/>
        <end position="106"/>
    </location>
</feature>
<feature type="region of interest" description="Disordered" evidence="2">
    <location>
        <begin position="80"/>
        <end position="106"/>
    </location>
</feature>
<feature type="compositionally biased region" description="Polar residues" evidence="2">
    <location>
        <begin position="90"/>
        <end position="100"/>
    </location>
</feature>
<protein>
    <recommendedName>
        <fullName evidence="1">Heat shock protein HspQ</fullName>
    </recommendedName>
</protein>
<sequence length="106" mass="12078">MMIASKFGIGQQVRHKLLGYLGVVVDVDAEYSLDQPNEDDIASNMTLRSAPWYHVVMEDDEGQPVHTYLAEAQITYELSDEHLDNDSMDELSQSIRNQLQAPRLRN</sequence>
<dbReference type="EMBL" id="AM942759">
    <property type="protein sequence ID" value="CAR41816.1"/>
    <property type="molecule type" value="Genomic_DNA"/>
</dbReference>
<dbReference type="SMR" id="B4ET62"/>
<dbReference type="EnsemblBacteria" id="CAR41816">
    <property type="protein sequence ID" value="CAR41816"/>
    <property type="gene ID" value="PMI0792"/>
</dbReference>
<dbReference type="KEGG" id="pmr:PMI0792"/>
<dbReference type="eggNOG" id="COG3785">
    <property type="taxonomic scope" value="Bacteria"/>
</dbReference>
<dbReference type="HOGENOM" id="CLU_123865_1_0_6"/>
<dbReference type="Proteomes" id="UP000008319">
    <property type="component" value="Chromosome"/>
</dbReference>
<dbReference type="GO" id="GO:0005737">
    <property type="term" value="C:cytoplasm"/>
    <property type="evidence" value="ECO:0007669"/>
    <property type="project" value="UniProtKB-SubCell"/>
</dbReference>
<dbReference type="GO" id="GO:0003677">
    <property type="term" value="F:DNA binding"/>
    <property type="evidence" value="ECO:0007669"/>
    <property type="project" value="InterPro"/>
</dbReference>
<dbReference type="GO" id="GO:0009408">
    <property type="term" value="P:response to heat"/>
    <property type="evidence" value="ECO:0007669"/>
    <property type="project" value="UniProtKB-UniRule"/>
</dbReference>
<dbReference type="Gene3D" id="2.30.30.390">
    <property type="entry name" value="Hemimethylated DNA-binding domain"/>
    <property type="match status" value="1"/>
</dbReference>
<dbReference type="HAMAP" id="MF_01194">
    <property type="entry name" value="HspQ"/>
    <property type="match status" value="1"/>
</dbReference>
<dbReference type="InterPro" id="IPR011722">
    <property type="entry name" value="Hemimethylated_DNA-bd_dom"/>
</dbReference>
<dbReference type="InterPro" id="IPR036623">
    <property type="entry name" value="Hemimethylated_DNA-bd_sf"/>
</dbReference>
<dbReference type="InterPro" id="IPR022866">
    <property type="entry name" value="HspQ"/>
</dbReference>
<dbReference type="NCBIfam" id="NF010729">
    <property type="entry name" value="PRK14129.1"/>
    <property type="match status" value="1"/>
</dbReference>
<dbReference type="NCBIfam" id="TIGR02097">
    <property type="entry name" value="yccV"/>
    <property type="match status" value="1"/>
</dbReference>
<dbReference type="Pfam" id="PF08755">
    <property type="entry name" value="YccV-like"/>
    <property type="match status" value="1"/>
</dbReference>
<dbReference type="SMART" id="SM00992">
    <property type="entry name" value="YccV-like"/>
    <property type="match status" value="1"/>
</dbReference>
<dbReference type="SUPFAM" id="SSF141255">
    <property type="entry name" value="YccV-like"/>
    <property type="match status" value="1"/>
</dbReference>
<organism>
    <name type="scientific">Proteus mirabilis (strain HI4320)</name>
    <dbReference type="NCBI Taxonomy" id="529507"/>
    <lineage>
        <taxon>Bacteria</taxon>
        <taxon>Pseudomonadati</taxon>
        <taxon>Pseudomonadota</taxon>
        <taxon>Gammaproteobacteria</taxon>
        <taxon>Enterobacterales</taxon>
        <taxon>Morganellaceae</taxon>
        <taxon>Proteus</taxon>
    </lineage>
</organism>
<name>HSPQ_PROMH</name>
<gene>
    <name evidence="1" type="primary">hspQ</name>
    <name type="ordered locus">PMI0792</name>
</gene>
<proteinExistence type="inferred from homology"/>
<reference key="1">
    <citation type="journal article" date="2008" name="J. Bacteriol.">
        <title>Complete genome sequence of uropathogenic Proteus mirabilis, a master of both adherence and motility.</title>
        <authorList>
            <person name="Pearson M.M."/>
            <person name="Sebaihia M."/>
            <person name="Churcher C."/>
            <person name="Quail M.A."/>
            <person name="Seshasayee A.S."/>
            <person name="Luscombe N.M."/>
            <person name="Abdellah Z."/>
            <person name="Arrosmith C."/>
            <person name="Atkin B."/>
            <person name="Chillingworth T."/>
            <person name="Hauser H."/>
            <person name="Jagels K."/>
            <person name="Moule S."/>
            <person name="Mungall K."/>
            <person name="Norbertczak H."/>
            <person name="Rabbinowitsch E."/>
            <person name="Walker D."/>
            <person name="Whithead S."/>
            <person name="Thomson N.R."/>
            <person name="Rather P.N."/>
            <person name="Parkhill J."/>
            <person name="Mobley H.L.T."/>
        </authorList>
    </citation>
    <scope>NUCLEOTIDE SEQUENCE [LARGE SCALE GENOMIC DNA]</scope>
    <source>
        <strain>HI4320</strain>
    </source>
</reference>
<evidence type="ECO:0000255" key="1">
    <source>
        <dbReference type="HAMAP-Rule" id="MF_01194"/>
    </source>
</evidence>
<evidence type="ECO:0000256" key="2">
    <source>
        <dbReference type="SAM" id="MobiDB-lite"/>
    </source>
</evidence>
<keyword id="KW-0963">Cytoplasm</keyword>
<keyword id="KW-1185">Reference proteome</keyword>
<keyword id="KW-0346">Stress response</keyword>